<name>EX7S_BEUC1</name>
<sequence length="86" mass="9299">MSQEPPARPDPATLSYEQARAELVDVVQRLEQGAATLEDSLALWERGEALAARCQEWLDGARDRLARVSPASGGATEAPAPAERDR</sequence>
<keyword id="KW-0963">Cytoplasm</keyword>
<keyword id="KW-0269">Exonuclease</keyword>
<keyword id="KW-0378">Hydrolase</keyword>
<keyword id="KW-0540">Nuclease</keyword>
<keyword id="KW-1185">Reference proteome</keyword>
<gene>
    <name evidence="1" type="primary">xseB</name>
    <name type="ordered locus">Bcav_1100</name>
</gene>
<accession>C5C0V6</accession>
<evidence type="ECO:0000255" key="1">
    <source>
        <dbReference type="HAMAP-Rule" id="MF_00337"/>
    </source>
</evidence>
<evidence type="ECO:0000256" key="2">
    <source>
        <dbReference type="SAM" id="MobiDB-lite"/>
    </source>
</evidence>
<feature type="chain" id="PRO_1000205216" description="Exodeoxyribonuclease 7 small subunit">
    <location>
        <begin position="1"/>
        <end position="86"/>
    </location>
</feature>
<feature type="region of interest" description="Disordered" evidence="2">
    <location>
        <begin position="67"/>
        <end position="86"/>
    </location>
</feature>
<reference key="1">
    <citation type="journal article" date="2009" name="Stand. Genomic Sci.">
        <title>Complete genome sequence of Beutenbergia cavernae type strain (HKI 0122).</title>
        <authorList>
            <person name="Land M."/>
            <person name="Pukall R."/>
            <person name="Abt B."/>
            <person name="Goker M."/>
            <person name="Rohde M."/>
            <person name="Glavina Del Rio T."/>
            <person name="Tice H."/>
            <person name="Copeland A."/>
            <person name="Cheng J.F."/>
            <person name="Lucas S."/>
            <person name="Chen F."/>
            <person name="Nolan M."/>
            <person name="Bruce D."/>
            <person name="Goodwin L."/>
            <person name="Pitluck S."/>
            <person name="Ivanova N."/>
            <person name="Mavromatis K."/>
            <person name="Ovchinnikova G."/>
            <person name="Pati A."/>
            <person name="Chen A."/>
            <person name="Palaniappan K."/>
            <person name="Hauser L."/>
            <person name="Chang Y.J."/>
            <person name="Jefferies C.C."/>
            <person name="Saunders E."/>
            <person name="Brettin T."/>
            <person name="Detter J.C."/>
            <person name="Han C."/>
            <person name="Chain P."/>
            <person name="Bristow J."/>
            <person name="Eisen J.A."/>
            <person name="Markowitz V."/>
            <person name="Hugenholtz P."/>
            <person name="Kyrpides N.C."/>
            <person name="Klenk H.P."/>
            <person name="Lapidus A."/>
        </authorList>
    </citation>
    <scope>NUCLEOTIDE SEQUENCE [LARGE SCALE GENOMIC DNA]</scope>
    <source>
        <strain>ATCC BAA-8 / DSM 12333 / CCUG 43141 / JCM 11478 / NBRC 16432 / NCIMB 13614 / HKI 0122</strain>
    </source>
</reference>
<proteinExistence type="inferred from homology"/>
<protein>
    <recommendedName>
        <fullName evidence="1">Exodeoxyribonuclease 7 small subunit</fullName>
        <ecNumber evidence="1">3.1.11.6</ecNumber>
    </recommendedName>
    <alternativeName>
        <fullName evidence="1">Exodeoxyribonuclease VII small subunit</fullName>
        <shortName evidence="1">Exonuclease VII small subunit</shortName>
    </alternativeName>
</protein>
<comment type="function">
    <text evidence="1">Bidirectionally degrades single-stranded DNA into large acid-insoluble oligonucleotides, which are then degraded further into small acid-soluble oligonucleotides.</text>
</comment>
<comment type="catalytic activity">
    <reaction evidence="1">
        <text>Exonucleolytic cleavage in either 5'- to 3'- or 3'- to 5'-direction to yield nucleoside 5'-phosphates.</text>
        <dbReference type="EC" id="3.1.11.6"/>
    </reaction>
</comment>
<comment type="subunit">
    <text evidence="1">Heterooligomer composed of large and small subunits.</text>
</comment>
<comment type="subcellular location">
    <subcellularLocation>
        <location evidence="1">Cytoplasm</location>
    </subcellularLocation>
</comment>
<comment type="similarity">
    <text evidence="1">Belongs to the XseB family.</text>
</comment>
<dbReference type="EC" id="3.1.11.6" evidence="1"/>
<dbReference type="EMBL" id="CP001618">
    <property type="protein sequence ID" value="ACQ79360.1"/>
    <property type="molecule type" value="Genomic_DNA"/>
</dbReference>
<dbReference type="RefSeq" id="WP_015881600.1">
    <property type="nucleotide sequence ID" value="NC_012669.1"/>
</dbReference>
<dbReference type="SMR" id="C5C0V6"/>
<dbReference type="STRING" id="471853.Bcav_1100"/>
<dbReference type="KEGG" id="bcv:Bcav_1100"/>
<dbReference type="eggNOG" id="COG1722">
    <property type="taxonomic scope" value="Bacteria"/>
</dbReference>
<dbReference type="HOGENOM" id="CLU_145918_0_2_11"/>
<dbReference type="OrthoDB" id="5244334at2"/>
<dbReference type="Proteomes" id="UP000007962">
    <property type="component" value="Chromosome"/>
</dbReference>
<dbReference type="GO" id="GO:0005829">
    <property type="term" value="C:cytosol"/>
    <property type="evidence" value="ECO:0007669"/>
    <property type="project" value="TreeGrafter"/>
</dbReference>
<dbReference type="GO" id="GO:0009318">
    <property type="term" value="C:exodeoxyribonuclease VII complex"/>
    <property type="evidence" value="ECO:0007669"/>
    <property type="project" value="InterPro"/>
</dbReference>
<dbReference type="GO" id="GO:0008855">
    <property type="term" value="F:exodeoxyribonuclease VII activity"/>
    <property type="evidence" value="ECO:0007669"/>
    <property type="project" value="UniProtKB-UniRule"/>
</dbReference>
<dbReference type="GO" id="GO:0006308">
    <property type="term" value="P:DNA catabolic process"/>
    <property type="evidence" value="ECO:0007669"/>
    <property type="project" value="UniProtKB-UniRule"/>
</dbReference>
<dbReference type="Gene3D" id="1.10.287.1040">
    <property type="entry name" value="Exonuclease VII, small subunit"/>
    <property type="match status" value="1"/>
</dbReference>
<dbReference type="HAMAP" id="MF_00337">
    <property type="entry name" value="Exonuc_7_S"/>
    <property type="match status" value="1"/>
</dbReference>
<dbReference type="InterPro" id="IPR003761">
    <property type="entry name" value="Exonuc_VII_S"/>
</dbReference>
<dbReference type="InterPro" id="IPR037004">
    <property type="entry name" value="Exonuc_VII_ssu_sf"/>
</dbReference>
<dbReference type="NCBIfam" id="NF002139">
    <property type="entry name" value="PRK00977.1-3"/>
    <property type="match status" value="1"/>
</dbReference>
<dbReference type="NCBIfam" id="TIGR01280">
    <property type="entry name" value="xseB"/>
    <property type="match status" value="1"/>
</dbReference>
<dbReference type="PANTHER" id="PTHR34137">
    <property type="entry name" value="EXODEOXYRIBONUCLEASE 7 SMALL SUBUNIT"/>
    <property type="match status" value="1"/>
</dbReference>
<dbReference type="PANTHER" id="PTHR34137:SF1">
    <property type="entry name" value="EXODEOXYRIBONUCLEASE 7 SMALL SUBUNIT"/>
    <property type="match status" value="1"/>
</dbReference>
<dbReference type="Pfam" id="PF02609">
    <property type="entry name" value="Exonuc_VII_S"/>
    <property type="match status" value="1"/>
</dbReference>
<dbReference type="PIRSF" id="PIRSF006488">
    <property type="entry name" value="Exonuc_VII_S"/>
    <property type="match status" value="1"/>
</dbReference>
<dbReference type="SUPFAM" id="SSF116842">
    <property type="entry name" value="XseB-like"/>
    <property type="match status" value="1"/>
</dbReference>
<organism>
    <name type="scientific">Beutenbergia cavernae (strain ATCC BAA-8 / DSM 12333 / CCUG 43141 / JCM 11478 / NBRC 16432 / NCIMB 13614 / HKI 0122)</name>
    <dbReference type="NCBI Taxonomy" id="471853"/>
    <lineage>
        <taxon>Bacteria</taxon>
        <taxon>Bacillati</taxon>
        <taxon>Actinomycetota</taxon>
        <taxon>Actinomycetes</taxon>
        <taxon>Micrococcales</taxon>
        <taxon>Beutenbergiaceae</taxon>
        <taxon>Beutenbergia</taxon>
    </lineage>
</organism>